<sequence>MTVDAVRVELGARAYEVRIGPGLIARAGAEIAPLLRRPKVAILTDETVAGLHLDPFRQALAEAGIASSALALPAGEATKGWPQFARAVEWLLEEKVERRDVVVALGGGVIGDLAGFAAAVLRRGVRFVQVPTTLLAQVDSSVGGKTGINTAQGKNLVGAFHQPSLVLADIGVLETLPPRDFRAGYGEVVKYGLLGDADFYEWLEEAGPRLAADTEARQRAVRRSVEMKAEIVARDETEEGDRALLNLGHTFCHALEKATGYSDRLLHGEGVAIGCALAFELSQRLGLCAQEAPSRLRAHLRAMGMKVDLRDIPGDLPSAEALLALMAQDKKVVDGKLRFILARGIGQAFVADDVPGDVVRTLLEDALAQR</sequence>
<accession>A3PJS2</accession>
<organism>
    <name type="scientific">Cereibacter sphaeroides (strain ATCC 17029 / ATH 2.4.9)</name>
    <name type="common">Rhodobacter sphaeroides</name>
    <dbReference type="NCBI Taxonomy" id="349101"/>
    <lineage>
        <taxon>Bacteria</taxon>
        <taxon>Pseudomonadati</taxon>
        <taxon>Pseudomonadota</taxon>
        <taxon>Alphaproteobacteria</taxon>
        <taxon>Rhodobacterales</taxon>
        <taxon>Paracoccaceae</taxon>
        <taxon>Cereibacter</taxon>
    </lineage>
</organism>
<reference key="1">
    <citation type="submission" date="2007-02" db="EMBL/GenBank/DDBJ databases">
        <title>Complete sequence of chromosome 1 of Rhodobacter sphaeroides ATCC 17029.</title>
        <authorList>
            <person name="Copeland A."/>
            <person name="Lucas S."/>
            <person name="Lapidus A."/>
            <person name="Barry K."/>
            <person name="Detter J.C."/>
            <person name="Glavina del Rio T."/>
            <person name="Hammon N."/>
            <person name="Israni S."/>
            <person name="Dalin E."/>
            <person name="Tice H."/>
            <person name="Pitluck S."/>
            <person name="Kiss H."/>
            <person name="Brettin T."/>
            <person name="Bruce D."/>
            <person name="Han C."/>
            <person name="Tapia R."/>
            <person name="Gilna P."/>
            <person name="Schmutz J."/>
            <person name="Larimer F."/>
            <person name="Land M."/>
            <person name="Hauser L."/>
            <person name="Kyrpides N."/>
            <person name="Mikhailova N."/>
            <person name="Richardson P."/>
            <person name="Mackenzie C."/>
            <person name="Choudhary M."/>
            <person name="Donohue T.J."/>
            <person name="Kaplan S."/>
        </authorList>
    </citation>
    <scope>NUCLEOTIDE SEQUENCE [LARGE SCALE GENOMIC DNA]</scope>
    <source>
        <strain>ATCC 17029 / ATH 2.4.9</strain>
    </source>
</reference>
<name>AROB_CERS1</name>
<feature type="chain" id="PRO_1000094588" description="3-dehydroquinate synthase">
    <location>
        <begin position="1"/>
        <end position="370"/>
    </location>
</feature>
<feature type="binding site" evidence="1">
    <location>
        <begin position="108"/>
        <end position="112"/>
    </location>
    <ligand>
        <name>NAD(+)</name>
        <dbReference type="ChEBI" id="CHEBI:57540"/>
    </ligand>
</feature>
<feature type="binding site" evidence="1">
    <location>
        <begin position="132"/>
        <end position="133"/>
    </location>
    <ligand>
        <name>NAD(+)</name>
        <dbReference type="ChEBI" id="CHEBI:57540"/>
    </ligand>
</feature>
<feature type="binding site" evidence="1">
    <location>
        <position position="145"/>
    </location>
    <ligand>
        <name>NAD(+)</name>
        <dbReference type="ChEBI" id="CHEBI:57540"/>
    </ligand>
</feature>
<feature type="binding site" evidence="1">
    <location>
        <position position="154"/>
    </location>
    <ligand>
        <name>NAD(+)</name>
        <dbReference type="ChEBI" id="CHEBI:57540"/>
    </ligand>
</feature>
<feature type="binding site" evidence="1">
    <location>
        <position position="187"/>
    </location>
    <ligand>
        <name>Zn(2+)</name>
        <dbReference type="ChEBI" id="CHEBI:29105"/>
    </ligand>
</feature>
<feature type="binding site" evidence="1">
    <location>
        <position position="249"/>
    </location>
    <ligand>
        <name>Zn(2+)</name>
        <dbReference type="ChEBI" id="CHEBI:29105"/>
    </ligand>
</feature>
<feature type="binding site" evidence="1">
    <location>
        <position position="267"/>
    </location>
    <ligand>
        <name>Zn(2+)</name>
        <dbReference type="ChEBI" id="CHEBI:29105"/>
    </ligand>
</feature>
<gene>
    <name evidence="1" type="primary">aroB</name>
    <name type="ordered locus">Rsph17029_1478</name>
</gene>
<protein>
    <recommendedName>
        <fullName evidence="1">3-dehydroquinate synthase</fullName>
        <shortName evidence="1">DHQS</shortName>
        <ecNumber evidence="1">4.2.3.4</ecNumber>
    </recommendedName>
</protein>
<dbReference type="EC" id="4.2.3.4" evidence="1"/>
<dbReference type="EMBL" id="CP000577">
    <property type="protein sequence ID" value="ABN76588.1"/>
    <property type="molecule type" value="Genomic_DNA"/>
</dbReference>
<dbReference type="RefSeq" id="WP_002719990.1">
    <property type="nucleotide sequence ID" value="NC_009049.1"/>
</dbReference>
<dbReference type="SMR" id="A3PJS2"/>
<dbReference type="KEGG" id="rsh:Rsph17029_1478"/>
<dbReference type="HOGENOM" id="CLU_001201_0_2_5"/>
<dbReference type="UniPathway" id="UPA00053">
    <property type="reaction ID" value="UER00085"/>
</dbReference>
<dbReference type="GO" id="GO:0005737">
    <property type="term" value="C:cytoplasm"/>
    <property type="evidence" value="ECO:0007669"/>
    <property type="project" value="UniProtKB-SubCell"/>
</dbReference>
<dbReference type="GO" id="GO:0003856">
    <property type="term" value="F:3-dehydroquinate synthase activity"/>
    <property type="evidence" value="ECO:0007669"/>
    <property type="project" value="UniProtKB-UniRule"/>
</dbReference>
<dbReference type="GO" id="GO:0046872">
    <property type="term" value="F:metal ion binding"/>
    <property type="evidence" value="ECO:0007669"/>
    <property type="project" value="UniProtKB-KW"/>
</dbReference>
<dbReference type="GO" id="GO:0000166">
    <property type="term" value="F:nucleotide binding"/>
    <property type="evidence" value="ECO:0007669"/>
    <property type="project" value="UniProtKB-KW"/>
</dbReference>
<dbReference type="GO" id="GO:0008652">
    <property type="term" value="P:amino acid biosynthetic process"/>
    <property type="evidence" value="ECO:0007669"/>
    <property type="project" value="UniProtKB-KW"/>
</dbReference>
<dbReference type="GO" id="GO:0009073">
    <property type="term" value="P:aromatic amino acid family biosynthetic process"/>
    <property type="evidence" value="ECO:0007669"/>
    <property type="project" value="UniProtKB-KW"/>
</dbReference>
<dbReference type="GO" id="GO:0009423">
    <property type="term" value="P:chorismate biosynthetic process"/>
    <property type="evidence" value="ECO:0007669"/>
    <property type="project" value="UniProtKB-UniRule"/>
</dbReference>
<dbReference type="CDD" id="cd08195">
    <property type="entry name" value="DHQS"/>
    <property type="match status" value="1"/>
</dbReference>
<dbReference type="FunFam" id="3.40.50.1970:FF:000007">
    <property type="entry name" value="Pentafunctional AROM polypeptide"/>
    <property type="match status" value="1"/>
</dbReference>
<dbReference type="Gene3D" id="3.40.50.1970">
    <property type="match status" value="1"/>
</dbReference>
<dbReference type="Gene3D" id="1.20.1090.10">
    <property type="entry name" value="Dehydroquinate synthase-like - alpha domain"/>
    <property type="match status" value="1"/>
</dbReference>
<dbReference type="HAMAP" id="MF_00110">
    <property type="entry name" value="DHQ_synthase"/>
    <property type="match status" value="1"/>
</dbReference>
<dbReference type="InterPro" id="IPR050071">
    <property type="entry name" value="Dehydroquinate_synthase"/>
</dbReference>
<dbReference type="InterPro" id="IPR016037">
    <property type="entry name" value="DHQ_synth_AroB"/>
</dbReference>
<dbReference type="InterPro" id="IPR030963">
    <property type="entry name" value="DHQ_synth_fam"/>
</dbReference>
<dbReference type="InterPro" id="IPR030960">
    <property type="entry name" value="DHQS/DOIS_N"/>
</dbReference>
<dbReference type="InterPro" id="IPR056179">
    <property type="entry name" value="DHQS_C"/>
</dbReference>
<dbReference type="NCBIfam" id="TIGR01357">
    <property type="entry name" value="aroB"/>
    <property type="match status" value="1"/>
</dbReference>
<dbReference type="PANTHER" id="PTHR43622">
    <property type="entry name" value="3-DEHYDROQUINATE SYNTHASE"/>
    <property type="match status" value="1"/>
</dbReference>
<dbReference type="PANTHER" id="PTHR43622:SF7">
    <property type="entry name" value="3-DEHYDROQUINATE SYNTHASE, CHLOROPLASTIC"/>
    <property type="match status" value="1"/>
</dbReference>
<dbReference type="Pfam" id="PF01761">
    <property type="entry name" value="DHQ_synthase"/>
    <property type="match status" value="1"/>
</dbReference>
<dbReference type="Pfam" id="PF24621">
    <property type="entry name" value="DHQS_C"/>
    <property type="match status" value="1"/>
</dbReference>
<dbReference type="PIRSF" id="PIRSF001455">
    <property type="entry name" value="DHQ_synth"/>
    <property type="match status" value="1"/>
</dbReference>
<dbReference type="SUPFAM" id="SSF56796">
    <property type="entry name" value="Dehydroquinate synthase-like"/>
    <property type="match status" value="1"/>
</dbReference>
<comment type="function">
    <text evidence="1">Catalyzes the conversion of 3-deoxy-D-arabino-heptulosonate 7-phosphate (DAHP) to dehydroquinate (DHQ).</text>
</comment>
<comment type="catalytic activity">
    <reaction evidence="1">
        <text>7-phospho-2-dehydro-3-deoxy-D-arabino-heptonate = 3-dehydroquinate + phosphate</text>
        <dbReference type="Rhea" id="RHEA:21968"/>
        <dbReference type="ChEBI" id="CHEBI:32364"/>
        <dbReference type="ChEBI" id="CHEBI:43474"/>
        <dbReference type="ChEBI" id="CHEBI:58394"/>
        <dbReference type="EC" id="4.2.3.4"/>
    </reaction>
</comment>
<comment type="cofactor">
    <cofactor evidence="1">
        <name>Co(2+)</name>
        <dbReference type="ChEBI" id="CHEBI:48828"/>
    </cofactor>
    <cofactor evidence="1">
        <name>Zn(2+)</name>
        <dbReference type="ChEBI" id="CHEBI:29105"/>
    </cofactor>
    <text evidence="1">Binds 1 divalent metal cation per subunit. Can use either Co(2+) or Zn(2+).</text>
</comment>
<comment type="cofactor">
    <cofactor evidence="1">
        <name>NAD(+)</name>
        <dbReference type="ChEBI" id="CHEBI:57540"/>
    </cofactor>
</comment>
<comment type="pathway">
    <text evidence="1">Metabolic intermediate biosynthesis; chorismate biosynthesis; chorismate from D-erythrose 4-phosphate and phosphoenolpyruvate: step 2/7.</text>
</comment>
<comment type="subcellular location">
    <subcellularLocation>
        <location evidence="1">Cytoplasm</location>
    </subcellularLocation>
</comment>
<comment type="similarity">
    <text evidence="1">Belongs to the sugar phosphate cyclases superfamily. Dehydroquinate synthase family.</text>
</comment>
<evidence type="ECO:0000255" key="1">
    <source>
        <dbReference type="HAMAP-Rule" id="MF_00110"/>
    </source>
</evidence>
<proteinExistence type="inferred from homology"/>
<keyword id="KW-0028">Amino-acid biosynthesis</keyword>
<keyword id="KW-0057">Aromatic amino acid biosynthesis</keyword>
<keyword id="KW-0170">Cobalt</keyword>
<keyword id="KW-0963">Cytoplasm</keyword>
<keyword id="KW-0456">Lyase</keyword>
<keyword id="KW-0479">Metal-binding</keyword>
<keyword id="KW-0520">NAD</keyword>
<keyword id="KW-0547">Nucleotide-binding</keyword>
<keyword id="KW-0862">Zinc</keyword>